<gene>
    <name evidence="1" type="primary">rimP</name>
    <name type="ordered locus">Sputw3181_1068</name>
</gene>
<keyword id="KW-0963">Cytoplasm</keyword>
<keyword id="KW-0690">Ribosome biogenesis</keyword>
<protein>
    <recommendedName>
        <fullName evidence="1">Ribosome maturation factor RimP</fullName>
    </recommendedName>
</protein>
<evidence type="ECO:0000255" key="1">
    <source>
        <dbReference type="HAMAP-Rule" id="MF_01077"/>
    </source>
</evidence>
<accession>A1RGX3</accession>
<proteinExistence type="inferred from homology"/>
<feature type="chain" id="PRO_1000064774" description="Ribosome maturation factor RimP">
    <location>
        <begin position="1"/>
        <end position="151"/>
    </location>
</feature>
<comment type="function">
    <text evidence="1">Required for maturation of 30S ribosomal subunits.</text>
</comment>
<comment type="subcellular location">
    <subcellularLocation>
        <location evidence="1">Cytoplasm</location>
    </subcellularLocation>
</comment>
<comment type="similarity">
    <text evidence="1">Belongs to the RimP family.</text>
</comment>
<name>RIMP_SHESW</name>
<organism>
    <name type="scientific">Shewanella sp. (strain W3-18-1)</name>
    <dbReference type="NCBI Taxonomy" id="351745"/>
    <lineage>
        <taxon>Bacteria</taxon>
        <taxon>Pseudomonadati</taxon>
        <taxon>Pseudomonadota</taxon>
        <taxon>Gammaproteobacteria</taxon>
        <taxon>Alteromonadales</taxon>
        <taxon>Shewanellaceae</taxon>
        <taxon>Shewanella</taxon>
    </lineage>
</organism>
<dbReference type="EMBL" id="CP000503">
    <property type="protein sequence ID" value="ABM23918.1"/>
    <property type="molecule type" value="Genomic_DNA"/>
</dbReference>
<dbReference type="RefSeq" id="WP_011788441.1">
    <property type="nucleotide sequence ID" value="NC_008750.1"/>
</dbReference>
<dbReference type="SMR" id="A1RGX3"/>
<dbReference type="GeneID" id="67444449"/>
<dbReference type="KEGG" id="shw:Sputw3181_1068"/>
<dbReference type="HOGENOM" id="CLU_070525_1_1_6"/>
<dbReference type="Proteomes" id="UP000002597">
    <property type="component" value="Chromosome"/>
</dbReference>
<dbReference type="GO" id="GO:0005829">
    <property type="term" value="C:cytosol"/>
    <property type="evidence" value="ECO:0007669"/>
    <property type="project" value="TreeGrafter"/>
</dbReference>
<dbReference type="GO" id="GO:0000028">
    <property type="term" value="P:ribosomal small subunit assembly"/>
    <property type="evidence" value="ECO:0007669"/>
    <property type="project" value="TreeGrafter"/>
</dbReference>
<dbReference type="GO" id="GO:0006412">
    <property type="term" value="P:translation"/>
    <property type="evidence" value="ECO:0007669"/>
    <property type="project" value="TreeGrafter"/>
</dbReference>
<dbReference type="CDD" id="cd01734">
    <property type="entry name" value="YlxS_C"/>
    <property type="match status" value="1"/>
</dbReference>
<dbReference type="FunFam" id="3.30.300.70:FF:000001">
    <property type="entry name" value="Ribosome maturation factor RimP"/>
    <property type="match status" value="1"/>
</dbReference>
<dbReference type="Gene3D" id="2.30.30.180">
    <property type="entry name" value="Ribosome maturation factor RimP, C-terminal domain"/>
    <property type="match status" value="1"/>
</dbReference>
<dbReference type="Gene3D" id="3.30.300.70">
    <property type="entry name" value="RimP-like superfamily, N-terminal"/>
    <property type="match status" value="1"/>
</dbReference>
<dbReference type="HAMAP" id="MF_01077">
    <property type="entry name" value="RimP"/>
    <property type="match status" value="1"/>
</dbReference>
<dbReference type="InterPro" id="IPR003728">
    <property type="entry name" value="Ribosome_maturation_RimP"/>
</dbReference>
<dbReference type="InterPro" id="IPR028998">
    <property type="entry name" value="RimP_C"/>
</dbReference>
<dbReference type="InterPro" id="IPR036847">
    <property type="entry name" value="RimP_C_sf"/>
</dbReference>
<dbReference type="InterPro" id="IPR028989">
    <property type="entry name" value="RimP_N"/>
</dbReference>
<dbReference type="InterPro" id="IPR035956">
    <property type="entry name" value="RimP_N_sf"/>
</dbReference>
<dbReference type="NCBIfam" id="NF000927">
    <property type="entry name" value="PRK00092.1-1"/>
    <property type="match status" value="1"/>
</dbReference>
<dbReference type="PANTHER" id="PTHR33867">
    <property type="entry name" value="RIBOSOME MATURATION FACTOR RIMP"/>
    <property type="match status" value="1"/>
</dbReference>
<dbReference type="PANTHER" id="PTHR33867:SF1">
    <property type="entry name" value="RIBOSOME MATURATION FACTOR RIMP"/>
    <property type="match status" value="1"/>
</dbReference>
<dbReference type="Pfam" id="PF17384">
    <property type="entry name" value="DUF150_C"/>
    <property type="match status" value="1"/>
</dbReference>
<dbReference type="Pfam" id="PF02576">
    <property type="entry name" value="RimP_N"/>
    <property type="match status" value="1"/>
</dbReference>
<dbReference type="SUPFAM" id="SSF74942">
    <property type="entry name" value="YhbC-like, C-terminal domain"/>
    <property type="match status" value="1"/>
</dbReference>
<dbReference type="SUPFAM" id="SSF75420">
    <property type="entry name" value="YhbC-like, N-terminal domain"/>
    <property type="match status" value="1"/>
</dbReference>
<reference key="1">
    <citation type="submission" date="2006-12" db="EMBL/GenBank/DDBJ databases">
        <title>Complete sequence of Shewanella sp. W3-18-1.</title>
        <authorList>
            <consortium name="US DOE Joint Genome Institute"/>
            <person name="Copeland A."/>
            <person name="Lucas S."/>
            <person name="Lapidus A."/>
            <person name="Barry K."/>
            <person name="Detter J.C."/>
            <person name="Glavina del Rio T."/>
            <person name="Hammon N."/>
            <person name="Israni S."/>
            <person name="Dalin E."/>
            <person name="Tice H."/>
            <person name="Pitluck S."/>
            <person name="Chain P."/>
            <person name="Malfatti S."/>
            <person name="Shin M."/>
            <person name="Vergez L."/>
            <person name="Schmutz J."/>
            <person name="Larimer F."/>
            <person name="Land M."/>
            <person name="Hauser L."/>
            <person name="Kyrpides N."/>
            <person name="Lykidis A."/>
            <person name="Tiedje J."/>
            <person name="Richardson P."/>
        </authorList>
    </citation>
    <scope>NUCLEOTIDE SEQUENCE [LARGE SCALE GENOMIC DNA]</scope>
    <source>
        <strain>W3-18-1</strain>
    </source>
</reference>
<sequence>MATLESRLAEMLKVPVEALGFQLWGIEYVQAGKHSILRVFIDGENGINIEDCANTSRQVSAVLDVEDPISTEYTLEVSSPGVDRPLFTAEQYAAYVGEDVKVQLTMPVAGSRNLKGAITKVEGQMLSLNVNGKELVVALDNIRKGNVIAKF</sequence>